<sequence>MEENKQRVKSMINILQLVAPGTPLREGIDNVLRAQTGGLIVLGYNEQIKSIVDGGFHINCAFSPASLYELAKMDGALILNETGSKILIANAQLVPDPSIDSIETGMRHRTAERVAKQTASLVVAISQRRNVITLYQGNLRYTLKDIGVILTKANQAIQTLEKYKAVWNDGITNLGILEFEEVVTMSEVVHVLHSVEMVLRIKNEIVSYIHELGTEGRLIRLQLTELLADLEAEAALLIKDYYQEKTQDHHQILKKLQDLANTQLLEDSDLVKLLGYPGQMSLEESVTPRGYRIASKISRVPPLIIENLINRFKTLQGVCRATINELDDVEGIGEVRAKKIREGLKRIQEHLYMSRHN</sequence>
<protein>
    <recommendedName>
        <fullName evidence="1">DNA integrity scanning protein DisA</fullName>
    </recommendedName>
    <alternativeName>
        <fullName evidence="1">Cyclic di-AMP synthase</fullName>
        <shortName evidence="1">c-di-AMP synthase</shortName>
    </alternativeName>
    <alternativeName>
        <fullName evidence="1">Diadenylate cyclase</fullName>
        <ecNumber evidence="1">2.7.7.85</ecNumber>
    </alternativeName>
</protein>
<comment type="function">
    <text evidence="1">Participates in a DNA-damage check-point that is active prior to asymmetric division when DNA is damaged. DisA forms globular foci that rapidly scan along the chromosomes during sporulation, searching for lesions. When a lesion is present, DisA pauses at the lesion site. This triggers a cellular response that culminates in a temporary block in sporulation initiation.</text>
</comment>
<comment type="function">
    <text evidence="1">Also has diadenylate cyclase activity, catalyzing the condensation of 2 ATP molecules into cyclic di-AMP (c-di-AMP). c-di-AMP acts as a signaling molecule that couples DNA integrity with progression of sporulation. The rise in c-di-AMP level generated by DisA while scanning the chromosome, operates as a positive signal that advances sporulation; upon encountering a lesion, the DisA focus arrests at the damaged site and halts c-di-AMP synthesis.</text>
</comment>
<comment type="catalytic activity">
    <reaction evidence="1">
        <text>2 ATP = 3',3'-c-di-AMP + 2 diphosphate</text>
        <dbReference type="Rhea" id="RHEA:35655"/>
        <dbReference type="ChEBI" id="CHEBI:30616"/>
        <dbReference type="ChEBI" id="CHEBI:33019"/>
        <dbReference type="ChEBI" id="CHEBI:71500"/>
        <dbReference type="EC" id="2.7.7.85"/>
    </reaction>
</comment>
<comment type="cofactor">
    <cofactor evidence="1">
        <name>Mg(2+)</name>
        <dbReference type="ChEBI" id="CHEBI:18420"/>
    </cofactor>
</comment>
<comment type="subunit">
    <text evidence="1">Homooctamer.</text>
</comment>
<comment type="similarity">
    <text evidence="1">Belongs to the DisA family.</text>
</comment>
<organism>
    <name type="scientific">Bacillus mycoides (strain KBAB4)</name>
    <name type="common">Bacillus weihenstephanensis</name>
    <dbReference type="NCBI Taxonomy" id="315730"/>
    <lineage>
        <taxon>Bacteria</taxon>
        <taxon>Bacillati</taxon>
        <taxon>Bacillota</taxon>
        <taxon>Bacilli</taxon>
        <taxon>Bacillales</taxon>
        <taxon>Bacillaceae</taxon>
        <taxon>Bacillus</taxon>
        <taxon>Bacillus cereus group</taxon>
    </lineage>
</organism>
<dbReference type="EC" id="2.7.7.85" evidence="1"/>
<dbReference type="EMBL" id="CP000903">
    <property type="protein sequence ID" value="ABY41347.1"/>
    <property type="molecule type" value="Genomic_DNA"/>
</dbReference>
<dbReference type="RefSeq" id="WP_000392162.1">
    <property type="nucleotide sequence ID" value="NZ_CAKMRX030000129.1"/>
</dbReference>
<dbReference type="SMR" id="A9VN96"/>
<dbReference type="GeneID" id="66264848"/>
<dbReference type="KEGG" id="bwe:BcerKBAB4_0078"/>
<dbReference type="eggNOG" id="COG1623">
    <property type="taxonomic scope" value="Bacteria"/>
</dbReference>
<dbReference type="HOGENOM" id="CLU_787128_0_0_9"/>
<dbReference type="Proteomes" id="UP000002154">
    <property type="component" value="Chromosome"/>
</dbReference>
<dbReference type="GO" id="GO:0004016">
    <property type="term" value="F:adenylate cyclase activity"/>
    <property type="evidence" value="ECO:0007669"/>
    <property type="project" value="TreeGrafter"/>
</dbReference>
<dbReference type="GO" id="GO:0005524">
    <property type="term" value="F:ATP binding"/>
    <property type="evidence" value="ECO:0007669"/>
    <property type="project" value="UniProtKB-UniRule"/>
</dbReference>
<dbReference type="GO" id="GO:0106408">
    <property type="term" value="F:diadenylate cyclase activity"/>
    <property type="evidence" value="ECO:0007669"/>
    <property type="project" value="UniProtKB-EC"/>
</dbReference>
<dbReference type="GO" id="GO:0003677">
    <property type="term" value="F:DNA binding"/>
    <property type="evidence" value="ECO:0007669"/>
    <property type="project" value="UniProtKB-UniRule"/>
</dbReference>
<dbReference type="GO" id="GO:0006281">
    <property type="term" value="P:DNA repair"/>
    <property type="evidence" value="ECO:0007669"/>
    <property type="project" value="UniProtKB-UniRule"/>
</dbReference>
<dbReference type="FunFam" id="1.10.150.20:FF:000023">
    <property type="entry name" value="DNA integrity scanning protein DisA"/>
    <property type="match status" value="1"/>
</dbReference>
<dbReference type="FunFam" id="1.20.1260.110:FF:000001">
    <property type="entry name" value="DNA integrity scanning protein DisA"/>
    <property type="match status" value="1"/>
</dbReference>
<dbReference type="FunFam" id="3.40.1700.10:FF:000001">
    <property type="entry name" value="DNA integrity scanning protein DisA"/>
    <property type="match status" value="1"/>
</dbReference>
<dbReference type="Gene3D" id="1.10.150.20">
    <property type="entry name" value="5' to 3' exonuclease, C-terminal subdomain"/>
    <property type="match status" value="1"/>
</dbReference>
<dbReference type="Gene3D" id="1.20.1260.110">
    <property type="entry name" value="DNA integrity scanning linker region"/>
    <property type="match status" value="1"/>
</dbReference>
<dbReference type="Gene3D" id="3.40.1700.10">
    <property type="entry name" value="DNA integrity scanning protein, DisA, N-terminal domain"/>
    <property type="match status" value="1"/>
</dbReference>
<dbReference type="HAMAP" id="MF_01438">
    <property type="entry name" value="DisA"/>
    <property type="match status" value="1"/>
</dbReference>
<dbReference type="InterPro" id="IPR050338">
    <property type="entry name" value="DisA"/>
</dbReference>
<dbReference type="InterPro" id="IPR038331">
    <property type="entry name" value="DisA_sf"/>
</dbReference>
<dbReference type="InterPro" id="IPR036888">
    <property type="entry name" value="DNA_integrity_DisA_N_sf"/>
</dbReference>
<dbReference type="InterPro" id="IPR018906">
    <property type="entry name" value="DNA_integrity_scan_DisA_link"/>
</dbReference>
<dbReference type="InterPro" id="IPR003390">
    <property type="entry name" value="DNA_integrity_scan_DisA_N"/>
</dbReference>
<dbReference type="InterPro" id="IPR023763">
    <property type="entry name" value="DNA_integrity_scanning_protein"/>
</dbReference>
<dbReference type="InterPro" id="IPR010994">
    <property type="entry name" value="RuvA_2-like"/>
</dbReference>
<dbReference type="NCBIfam" id="NF010009">
    <property type="entry name" value="PRK13482.1"/>
    <property type="match status" value="1"/>
</dbReference>
<dbReference type="PANTHER" id="PTHR34185">
    <property type="entry name" value="DIADENYLATE CYCLASE"/>
    <property type="match status" value="1"/>
</dbReference>
<dbReference type="PANTHER" id="PTHR34185:SF3">
    <property type="entry name" value="DNA INTEGRITY SCANNING PROTEIN DISA"/>
    <property type="match status" value="1"/>
</dbReference>
<dbReference type="Pfam" id="PF02457">
    <property type="entry name" value="DAC"/>
    <property type="match status" value="1"/>
</dbReference>
<dbReference type="Pfam" id="PF10635">
    <property type="entry name" value="DisA-linker"/>
    <property type="match status" value="1"/>
</dbReference>
<dbReference type="SUPFAM" id="SSF47781">
    <property type="entry name" value="RuvA domain 2-like"/>
    <property type="match status" value="1"/>
</dbReference>
<dbReference type="SUPFAM" id="SSF143597">
    <property type="entry name" value="YojJ-like"/>
    <property type="match status" value="1"/>
</dbReference>
<dbReference type="PROSITE" id="PS51794">
    <property type="entry name" value="DAC"/>
    <property type="match status" value="1"/>
</dbReference>
<gene>
    <name evidence="1" type="primary">disA</name>
    <name type="ordered locus">BcerKBAB4_0078</name>
</gene>
<keyword id="KW-0067">ATP-binding</keyword>
<keyword id="KW-0227">DNA damage</keyword>
<keyword id="KW-0234">DNA repair</keyword>
<keyword id="KW-0238">DNA-binding</keyword>
<keyword id="KW-0460">Magnesium</keyword>
<keyword id="KW-0547">Nucleotide-binding</keyword>
<keyword id="KW-0548">Nucleotidyltransferase</keyword>
<keyword id="KW-0808">Transferase</keyword>
<evidence type="ECO:0000255" key="1">
    <source>
        <dbReference type="HAMAP-Rule" id="MF_01438"/>
    </source>
</evidence>
<evidence type="ECO:0000255" key="2">
    <source>
        <dbReference type="PROSITE-ProRule" id="PRU01130"/>
    </source>
</evidence>
<reference key="1">
    <citation type="journal article" date="2008" name="Chem. Biol. Interact.">
        <title>Extending the Bacillus cereus group genomics to putative food-borne pathogens of different toxicity.</title>
        <authorList>
            <person name="Lapidus A."/>
            <person name="Goltsman E."/>
            <person name="Auger S."/>
            <person name="Galleron N."/>
            <person name="Segurens B."/>
            <person name="Dossat C."/>
            <person name="Land M.L."/>
            <person name="Broussolle V."/>
            <person name="Brillard J."/>
            <person name="Guinebretiere M.-H."/>
            <person name="Sanchis V."/>
            <person name="Nguen-the C."/>
            <person name="Lereclus D."/>
            <person name="Richardson P."/>
            <person name="Wincker P."/>
            <person name="Weissenbach J."/>
            <person name="Ehrlich S.D."/>
            <person name="Sorokin A."/>
        </authorList>
    </citation>
    <scope>NUCLEOTIDE SEQUENCE [LARGE SCALE GENOMIC DNA]</scope>
    <source>
        <strain>KBAB4</strain>
    </source>
</reference>
<accession>A9VN96</accession>
<feature type="chain" id="PRO_1000145856" description="DNA integrity scanning protein DisA">
    <location>
        <begin position="1"/>
        <end position="357"/>
    </location>
</feature>
<feature type="domain" description="DAC" evidence="2">
    <location>
        <begin position="8"/>
        <end position="146"/>
    </location>
</feature>
<feature type="binding site" evidence="1">
    <location>
        <position position="75"/>
    </location>
    <ligand>
        <name>ATP</name>
        <dbReference type="ChEBI" id="CHEBI:30616"/>
    </ligand>
</feature>
<feature type="binding site" evidence="1">
    <location>
        <position position="93"/>
    </location>
    <ligand>
        <name>ATP</name>
        <dbReference type="ChEBI" id="CHEBI:30616"/>
    </ligand>
</feature>
<feature type="binding site" evidence="1">
    <location>
        <begin position="106"/>
        <end position="110"/>
    </location>
    <ligand>
        <name>ATP</name>
        <dbReference type="ChEBI" id="CHEBI:30616"/>
    </ligand>
</feature>
<name>DISA_BACMK</name>
<proteinExistence type="inferred from homology"/>